<accession>Q57RS7</accession>
<evidence type="ECO:0000255" key="1">
    <source>
        <dbReference type="HAMAP-Rule" id="MF_00049"/>
    </source>
</evidence>
<evidence type="ECO:0000305" key="2"/>
<name>SYL_SALCH</name>
<protein>
    <recommendedName>
        <fullName evidence="1">Leucine--tRNA ligase</fullName>
        <ecNumber evidence="1">6.1.1.4</ecNumber>
    </recommendedName>
    <alternativeName>
        <fullName evidence="1">Leucyl-tRNA synthetase</fullName>
        <shortName evidence="1">LeuRS</shortName>
    </alternativeName>
</protein>
<dbReference type="EC" id="6.1.1.4" evidence="1"/>
<dbReference type="EMBL" id="AE017220">
    <property type="protein sequence ID" value="AAX64584.1"/>
    <property type="status" value="ALT_INIT"/>
    <property type="molecule type" value="Genomic_DNA"/>
</dbReference>
<dbReference type="SMR" id="Q57RS7"/>
<dbReference type="KEGG" id="sec:SCH_0678"/>
<dbReference type="HOGENOM" id="CLU_004427_0_0_6"/>
<dbReference type="Proteomes" id="UP000000538">
    <property type="component" value="Chromosome"/>
</dbReference>
<dbReference type="GO" id="GO:0005829">
    <property type="term" value="C:cytosol"/>
    <property type="evidence" value="ECO:0007669"/>
    <property type="project" value="TreeGrafter"/>
</dbReference>
<dbReference type="GO" id="GO:0002161">
    <property type="term" value="F:aminoacyl-tRNA deacylase activity"/>
    <property type="evidence" value="ECO:0007669"/>
    <property type="project" value="InterPro"/>
</dbReference>
<dbReference type="GO" id="GO:0005524">
    <property type="term" value="F:ATP binding"/>
    <property type="evidence" value="ECO:0007669"/>
    <property type="project" value="UniProtKB-UniRule"/>
</dbReference>
<dbReference type="GO" id="GO:0004823">
    <property type="term" value="F:leucine-tRNA ligase activity"/>
    <property type="evidence" value="ECO:0007669"/>
    <property type="project" value="UniProtKB-UniRule"/>
</dbReference>
<dbReference type="GO" id="GO:0006429">
    <property type="term" value="P:leucyl-tRNA aminoacylation"/>
    <property type="evidence" value="ECO:0007669"/>
    <property type="project" value="UniProtKB-UniRule"/>
</dbReference>
<dbReference type="CDD" id="cd07958">
    <property type="entry name" value="Anticodon_Ia_Leu_BEm"/>
    <property type="match status" value="1"/>
</dbReference>
<dbReference type="CDD" id="cd00812">
    <property type="entry name" value="LeuRS_core"/>
    <property type="match status" value="1"/>
</dbReference>
<dbReference type="FunFam" id="1.10.730.10:FF:000002">
    <property type="entry name" value="Leucine--tRNA ligase"/>
    <property type="match status" value="2"/>
</dbReference>
<dbReference type="FunFam" id="2.20.28.290:FF:000001">
    <property type="entry name" value="Leucine--tRNA ligase"/>
    <property type="match status" value="1"/>
</dbReference>
<dbReference type="FunFam" id="3.10.20.590:FF:000001">
    <property type="entry name" value="Leucine--tRNA ligase"/>
    <property type="match status" value="1"/>
</dbReference>
<dbReference type="FunFam" id="3.40.50.620:FF:000003">
    <property type="entry name" value="Leucine--tRNA ligase"/>
    <property type="match status" value="1"/>
</dbReference>
<dbReference type="FunFam" id="3.40.50.620:FF:000124">
    <property type="entry name" value="Leucine--tRNA ligase"/>
    <property type="match status" value="1"/>
</dbReference>
<dbReference type="FunFam" id="3.90.740.10:FF:000012">
    <property type="entry name" value="Leucine--tRNA ligase"/>
    <property type="match status" value="1"/>
</dbReference>
<dbReference type="Gene3D" id="2.20.28.290">
    <property type="match status" value="1"/>
</dbReference>
<dbReference type="Gene3D" id="3.10.20.590">
    <property type="match status" value="1"/>
</dbReference>
<dbReference type="Gene3D" id="3.40.50.620">
    <property type="entry name" value="HUPs"/>
    <property type="match status" value="1"/>
</dbReference>
<dbReference type="Gene3D" id="1.10.730.10">
    <property type="entry name" value="Isoleucyl-tRNA Synthetase, Domain 1"/>
    <property type="match status" value="1"/>
</dbReference>
<dbReference type="Gene3D" id="3.90.740.10">
    <property type="entry name" value="Valyl/Leucyl/Isoleucyl-tRNA synthetase, editing domain"/>
    <property type="match status" value="1"/>
</dbReference>
<dbReference type="HAMAP" id="MF_00049_B">
    <property type="entry name" value="Leu_tRNA_synth_B"/>
    <property type="match status" value="1"/>
</dbReference>
<dbReference type="InterPro" id="IPR001412">
    <property type="entry name" value="aa-tRNA-synth_I_CS"/>
</dbReference>
<dbReference type="InterPro" id="IPR002300">
    <property type="entry name" value="aa-tRNA-synth_Ia"/>
</dbReference>
<dbReference type="InterPro" id="IPR002302">
    <property type="entry name" value="Leu-tRNA-ligase"/>
</dbReference>
<dbReference type="InterPro" id="IPR025709">
    <property type="entry name" value="Leu_tRNA-synth_edit"/>
</dbReference>
<dbReference type="InterPro" id="IPR013155">
    <property type="entry name" value="M/V/L/I-tRNA-synth_anticd-bd"/>
</dbReference>
<dbReference type="InterPro" id="IPR015413">
    <property type="entry name" value="Methionyl/Leucyl_tRNA_Synth"/>
</dbReference>
<dbReference type="InterPro" id="IPR014729">
    <property type="entry name" value="Rossmann-like_a/b/a_fold"/>
</dbReference>
<dbReference type="InterPro" id="IPR009080">
    <property type="entry name" value="tRNAsynth_Ia_anticodon-bd"/>
</dbReference>
<dbReference type="InterPro" id="IPR009008">
    <property type="entry name" value="Val/Leu/Ile-tRNA-synth_edit"/>
</dbReference>
<dbReference type="NCBIfam" id="TIGR00396">
    <property type="entry name" value="leuS_bact"/>
    <property type="match status" value="1"/>
</dbReference>
<dbReference type="PANTHER" id="PTHR43740:SF2">
    <property type="entry name" value="LEUCINE--TRNA LIGASE, MITOCHONDRIAL"/>
    <property type="match status" value="1"/>
</dbReference>
<dbReference type="PANTHER" id="PTHR43740">
    <property type="entry name" value="LEUCYL-TRNA SYNTHETASE"/>
    <property type="match status" value="1"/>
</dbReference>
<dbReference type="Pfam" id="PF08264">
    <property type="entry name" value="Anticodon_1"/>
    <property type="match status" value="1"/>
</dbReference>
<dbReference type="Pfam" id="PF00133">
    <property type="entry name" value="tRNA-synt_1"/>
    <property type="match status" value="2"/>
</dbReference>
<dbReference type="Pfam" id="PF13603">
    <property type="entry name" value="tRNA-synt_1_2"/>
    <property type="match status" value="1"/>
</dbReference>
<dbReference type="Pfam" id="PF09334">
    <property type="entry name" value="tRNA-synt_1g"/>
    <property type="match status" value="1"/>
</dbReference>
<dbReference type="PRINTS" id="PR00985">
    <property type="entry name" value="TRNASYNTHLEU"/>
</dbReference>
<dbReference type="SUPFAM" id="SSF47323">
    <property type="entry name" value="Anticodon-binding domain of a subclass of class I aminoacyl-tRNA synthetases"/>
    <property type="match status" value="1"/>
</dbReference>
<dbReference type="SUPFAM" id="SSF52374">
    <property type="entry name" value="Nucleotidylyl transferase"/>
    <property type="match status" value="1"/>
</dbReference>
<dbReference type="SUPFAM" id="SSF50677">
    <property type="entry name" value="ValRS/IleRS/LeuRS editing domain"/>
    <property type="match status" value="1"/>
</dbReference>
<dbReference type="PROSITE" id="PS00178">
    <property type="entry name" value="AA_TRNA_LIGASE_I"/>
    <property type="match status" value="1"/>
</dbReference>
<organism>
    <name type="scientific">Salmonella choleraesuis (strain SC-B67)</name>
    <dbReference type="NCBI Taxonomy" id="321314"/>
    <lineage>
        <taxon>Bacteria</taxon>
        <taxon>Pseudomonadati</taxon>
        <taxon>Pseudomonadota</taxon>
        <taxon>Gammaproteobacteria</taxon>
        <taxon>Enterobacterales</taxon>
        <taxon>Enterobacteriaceae</taxon>
        <taxon>Salmonella</taxon>
    </lineage>
</organism>
<proteinExistence type="inferred from homology"/>
<reference key="1">
    <citation type="journal article" date="2005" name="Nucleic Acids Res.">
        <title>The genome sequence of Salmonella enterica serovar Choleraesuis, a highly invasive and resistant zoonotic pathogen.</title>
        <authorList>
            <person name="Chiu C.-H."/>
            <person name="Tang P."/>
            <person name="Chu C."/>
            <person name="Hu S."/>
            <person name="Bao Q."/>
            <person name="Yu J."/>
            <person name="Chou Y.-Y."/>
            <person name="Wang H.-S."/>
            <person name="Lee Y.-S."/>
        </authorList>
    </citation>
    <scope>NUCLEOTIDE SEQUENCE [LARGE SCALE GENOMIC DNA]</scope>
    <source>
        <strain>SC-B67</strain>
    </source>
</reference>
<keyword id="KW-0030">Aminoacyl-tRNA synthetase</keyword>
<keyword id="KW-0067">ATP-binding</keyword>
<keyword id="KW-0963">Cytoplasm</keyword>
<keyword id="KW-0436">Ligase</keyword>
<keyword id="KW-0547">Nucleotide-binding</keyword>
<keyword id="KW-0648">Protein biosynthesis</keyword>
<comment type="catalytic activity">
    <reaction evidence="1">
        <text>tRNA(Leu) + L-leucine + ATP = L-leucyl-tRNA(Leu) + AMP + diphosphate</text>
        <dbReference type="Rhea" id="RHEA:11688"/>
        <dbReference type="Rhea" id="RHEA-COMP:9613"/>
        <dbReference type="Rhea" id="RHEA-COMP:9622"/>
        <dbReference type="ChEBI" id="CHEBI:30616"/>
        <dbReference type="ChEBI" id="CHEBI:33019"/>
        <dbReference type="ChEBI" id="CHEBI:57427"/>
        <dbReference type="ChEBI" id="CHEBI:78442"/>
        <dbReference type="ChEBI" id="CHEBI:78494"/>
        <dbReference type="ChEBI" id="CHEBI:456215"/>
        <dbReference type="EC" id="6.1.1.4"/>
    </reaction>
</comment>
<comment type="subcellular location">
    <subcellularLocation>
        <location evidence="1">Cytoplasm</location>
    </subcellularLocation>
</comment>
<comment type="similarity">
    <text evidence="1">Belongs to the class-I aminoacyl-tRNA synthetase family.</text>
</comment>
<comment type="sequence caution" evidence="2">
    <conflict type="erroneous initiation">
        <sequence resource="EMBL-CDS" id="AAX64584"/>
    </conflict>
</comment>
<gene>
    <name evidence="1" type="primary">leuS</name>
    <name type="ordered locus">SCH_0678</name>
</gene>
<sequence>MQEQYRPEEIESKVQLHWDEKRTFEVTEDESKEKYYCLSMLPYPSGRLHMGHVRNYTIGDVVARYQRMLGKNVLQPIGWDAFGLPAEGAAVKNNTAPAPWTYDNIAYMKNQLKTLGFGYDWSREIATCTPEYYRWEQKFFTELYKKGLVYKKTSAVNWCPNDQTVLANEQVIDGCCWRCDTKVERKEIPQWFIKITAYADELLRDLDKLDHWPDTVKTMQRNWIGRSEGVEITFDVKGYDNTLTVYTTRPDTFMGATYLAVAAGHPLAQKAAANNAELAAFIDECRNTKVAEAEMATMEKKGVDTGYKAIHPLTGEEIPVWAANFVLMEYGTGAVMAVPGHDQRDYEFASKYGLTIKPVILAADSSEPDLSEQALTEKGVLFNSGEFDGLAFEAAFNAIADKLAEKGVGERKVNYRLRDWGVSRQRYWGAPIPMVTLEDGTVLPTPEDQLPVILPEDVVMDGITSPIKADPEWAKTTVNGMPALRETDTFDTFMESSWYYARYTCPQYQEGMLDSKAANYWLPVDIYIGGIEHAIMHLLYFRFFHKLMRDAGMVTSDEPAKQLLCQGMVLADAFYYVGENGERNWVSPVDAIVERDEKGRIVKAKDAAGHELVYTGMSKMSKSKNNGIDPQVMVERYGADTVRLFMMFASPADMTLEWQESGVEGANRFIKRVWKLVYEHTAKGPVAALNVDALSEDQKALRRDVHKTIAKVTDDIGRRQTFNTAIAAIMELMNKLAKAPQEGEQDRALLQEALQAVVRMLNPFTPHVCFTLWQELGGEGDIDNAPWPVADEQAMVENTTLVVVQVNGKVRGKITVAVDATEEQVRERAGQEHLVAKYLDGVTVRKVIYVPGKLLNLVVG</sequence>
<feature type="chain" id="PRO_0000334811" description="Leucine--tRNA ligase">
    <location>
        <begin position="1"/>
        <end position="860"/>
    </location>
</feature>
<feature type="short sequence motif" description="'HIGH' region">
    <location>
        <begin position="42"/>
        <end position="52"/>
    </location>
</feature>
<feature type="short sequence motif" description="'KMSKS' region">
    <location>
        <begin position="619"/>
        <end position="623"/>
    </location>
</feature>
<feature type="binding site" evidence="1">
    <location>
        <position position="622"/>
    </location>
    <ligand>
        <name>ATP</name>
        <dbReference type="ChEBI" id="CHEBI:30616"/>
    </ligand>
</feature>